<comment type="function">
    <text evidence="1">Catalyzes the epimerization of the S- and R-forms of NAD(P)HX, a damaged form of NAD(P)H that is a result of enzymatic or heat-dependent hydration. This is a prerequisite for the S-specific NAD(P)H-hydrate dehydratase to allow the repair of both epimers of NAD(P)HX.</text>
</comment>
<comment type="catalytic activity">
    <reaction>
        <text>(6R)-NADHX = (6S)-NADHX</text>
        <dbReference type="Rhea" id="RHEA:32215"/>
        <dbReference type="ChEBI" id="CHEBI:64074"/>
        <dbReference type="ChEBI" id="CHEBI:64075"/>
        <dbReference type="EC" id="5.1.99.6"/>
    </reaction>
</comment>
<comment type="catalytic activity">
    <reaction>
        <text>(6R)-NADPHX = (6S)-NADPHX</text>
        <dbReference type="Rhea" id="RHEA:32227"/>
        <dbReference type="ChEBI" id="CHEBI:64076"/>
        <dbReference type="ChEBI" id="CHEBI:64077"/>
        <dbReference type="EC" id="5.1.99.6"/>
    </reaction>
</comment>
<comment type="cofactor">
    <cofactor evidence="1">
        <name>K(+)</name>
        <dbReference type="ChEBI" id="CHEBI:29103"/>
    </cofactor>
    <text evidence="1">Binds 1 potassium ion per subunit.</text>
</comment>
<comment type="similarity">
    <text evidence="1">Belongs to the NnrE/AIBP family.</text>
</comment>
<gene>
    <name type="ORF">GM11335</name>
</gene>
<proteinExistence type="inferred from homology"/>
<evidence type="ECO:0000255" key="1">
    <source>
        <dbReference type="HAMAP-Rule" id="MF_03159"/>
    </source>
</evidence>
<evidence type="ECO:0000312" key="2">
    <source>
        <dbReference type="EMBL" id="EDW45680.1"/>
    </source>
</evidence>
<feature type="chain" id="PRO_0000379431" description="NAD(P)H-hydrate epimerase">
    <location>
        <begin position="1"/>
        <end position="230"/>
    </location>
</feature>
<feature type="domain" description="YjeF N-terminal" evidence="1">
    <location>
        <begin position="11"/>
        <end position="218"/>
    </location>
</feature>
<feature type="binding site" evidence="1">
    <location>
        <begin position="61"/>
        <end position="65"/>
    </location>
    <ligand>
        <name>(6S)-NADPHX</name>
        <dbReference type="ChEBI" id="CHEBI:64076"/>
    </ligand>
</feature>
<feature type="binding site" evidence="1">
    <location>
        <position position="62"/>
    </location>
    <ligand>
        <name>K(+)</name>
        <dbReference type="ChEBI" id="CHEBI:29103"/>
    </ligand>
</feature>
<feature type="binding site" evidence="1">
    <location>
        <position position="126"/>
    </location>
    <ligand>
        <name>K(+)</name>
        <dbReference type="ChEBI" id="CHEBI:29103"/>
    </ligand>
</feature>
<feature type="binding site" evidence="1">
    <location>
        <begin position="130"/>
        <end position="136"/>
    </location>
    <ligand>
        <name>(6S)-NADPHX</name>
        <dbReference type="ChEBI" id="CHEBI:64076"/>
    </ligand>
</feature>
<feature type="binding site" evidence="1">
    <location>
        <position position="159"/>
    </location>
    <ligand>
        <name>(6S)-NADPHX</name>
        <dbReference type="ChEBI" id="CHEBI:64076"/>
    </ligand>
</feature>
<feature type="binding site" evidence="1">
    <location>
        <position position="162"/>
    </location>
    <ligand>
        <name>K(+)</name>
        <dbReference type="ChEBI" id="CHEBI:29103"/>
    </ligand>
</feature>
<sequence>MDLKYLNQKEAIAVDQELFNEYKFSVDQLMELAGLSCAHAVAKCFPAEKHPRILVCCGPGNNGGDGLVAARHLALMGYTPTIYYPKPTAKPLFENLSHQCQQMDICDVKECPSVESAARDYDLILDALFGFSFKPPVRADFVAVVELMQQTKLPIASVDIPSGWDVEKGKLTECDVEPALLISLTAPKLCARQFRGEHHYLGGRFVPPALQRKYELNLPVYPGNELCVKL</sequence>
<name>NNRE_DROSE</name>
<organism>
    <name type="scientific">Drosophila sechellia</name>
    <name type="common">Fruit fly</name>
    <dbReference type="NCBI Taxonomy" id="7238"/>
    <lineage>
        <taxon>Eukaryota</taxon>
        <taxon>Metazoa</taxon>
        <taxon>Ecdysozoa</taxon>
        <taxon>Arthropoda</taxon>
        <taxon>Hexapoda</taxon>
        <taxon>Insecta</taxon>
        <taxon>Pterygota</taxon>
        <taxon>Neoptera</taxon>
        <taxon>Endopterygota</taxon>
        <taxon>Diptera</taxon>
        <taxon>Brachycera</taxon>
        <taxon>Muscomorpha</taxon>
        <taxon>Ephydroidea</taxon>
        <taxon>Drosophilidae</taxon>
        <taxon>Drosophila</taxon>
        <taxon>Sophophora</taxon>
    </lineage>
</organism>
<accession>B4IDM2</accession>
<protein>
    <recommendedName>
        <fullName evidence="1">NAD(P)H-hydrate epimerase</fullName>
        <ecNumber>5.1.99.6</ecNumber>
    </recommendedName>
    <alternativeName>
        <fullName evidence="1">NAD(P)HX epimerase</fullName>
    </alternativeName>
</protein>
<dbReference type="EC" id="5.1.99.6"/>
<dbReference type="EMBL" id="CH480830">
    <property type="protein sequence ID" value="EDW45680.1"/>
    <property type="molecule type" value="Genomic_DNA"/>
</dbReference>
<dbReference type="RefSeq" id="XP_002041832.1">
    <property type="nucleotide sequence ID" value="XM_002041796.1"/>
</dbReference>
<dbReference type="SMR" id="B4IDM2"/>
<dbReference type="STRING" id="7238.B4IDM2"/>
<dbReference type="EnsemblMetazoa" id="FBtr0194320">
    <property type="protein sequence ID" value="FBpp0192812"/>
    <property type="gene ID" value="FBgn0166279"/>
</dbReference>
<dbReference type="EnsemblMetazoa" id="XM_002041796.2">
    <property type="protein sequence ID" value="XP_002041832.2"/>
    <property type="gene ID" value="LOC6617516"/>
</dbReference>
<dbReference type="GeneID" id="6617516"/>
<dbReference type="KEGG" id="dse:6617516"/>
<dbReference type="HOGENOM" id="CLU_024853_3_0_1"/>
<dbReference type="OMA" id="RHLFHYG"/>
<dbReference type="PhylomeDB" id="B4IDM2"/>
<dbReference type="Proteomes" id="UP000001292">
    <property type="component" value="Unassembled WGS sequence"/>
</dbReference>
<dbReference type="GO" id="GO:0005739">
    <property type="term" value="C:mitochondrion"/>
    <property type="evidence" value="ECO:0007669"/>
    <property type="project" value="TreeGrafter"/>
</dbReference>
<dbReference type="GO" id="GO:0046872">
    <property type="term" value="F:metal ion binding"/>
    <property type="evidence" value="ECO:0007669"/>
    <property type="project" value="UniProtKB-KW"/>
</dbReference>
<dbReference type="GO" id="GO:0052856">
    <property type="term" value="F:NAD(P)HX epimerase activity"/>
    <property type="evidence" value="ECO:0007669"/>
    <property type="project" value="UniProtKB-UniRule"/>
</dbReference>
<dbReference type="GO" id="GO:0000166">
    <property type="term" value="F:nucleotide binding"/>
    <property type="evidence" value="ECO:0007669"/>
    <property type="project" value="UniProtKB-KW"/>
</dbReference>
<dbReference type="FunFam" id="3.40.50.10260:FF:000013">
    <property type="entry name" value="NAD(P)H-hydrate epimerase"/>
    <property type="match status" value="1"/>
</dbReference>
<dbReference type="Gene3D" id="3.40.50.10260">
    <property type="entry name" value="YjeF N-terminal domain"/>
    <property type="match status" value="1"/>
</dbReference>
<dbReference type="HAMAP" id="MF_01966">
    <property type="entry name" value="NADHX_epimerase"/>
    <property type="match status" value="1"/>
</dbReference>
<dbReference type="InterPro" id="IPR004443">
    <property type="entry name" value="YjeF_N_dom"/>
</dbReference>
<dbReference type="InterPro" id="IPR036652">
    <property type="entry name" value="YjeF_N_dom_sf"/>
</dbReference>
<dbReference type="InterPro" id="IPR032976">
    <property type="entry name" value="YJEFN_prot_NAXE-like"/>
</dbReference>
<dbReference type="NCBIfam" id="TIGR00197">
    <property type="entry name" value="yjeF_nterm"/>
    <property type="match status" value="1"/>
</dbReference>
<dbReference type="PANTHER" id="PTHR13232">
    <property type="entry name" value="NAD(P)H-HYDRATE EPIMERASE"/>
    <property type="match status" value="1"/>
</dbReference>
<dbReference type="PANTHER" id="PTHR13232:SF10">
    <property type="entry name" value="NAD(P)H-HYDRATE EPIMERASE"/>
    <property type="match status" value="1"/>
</dbReference>
<dbReference type="Pfam" id="PF03853">
    <property type="entry name" value="YjeF_N"/>
    <property type="match status" value="1"/>
</dbReference>
<dbReference type="SUPFAM" id="SSF64153">
    <property type="entry name" value="YjeF N-terminal domain-like"/>
    <property type="match status" value="1"/>
</dbReference>
<dbReference type="PROSITE" id="PS51385">
    <property type="entry name" value="YJEF_N"/>
    <property type="match status" value="1"/>
</dbReference>
<reference evidence="2" key="1">
    <citation type="journal article" date="2007" name="Nature">
        <title>Evolution of genes and genomes on the Drosophila phylogeny.</title>
        <authorList>
            <consortium name="Drosophila 12 genomes consortium"/>
        </authorList>
    </citation>
    <scope>NUCLEOTIDE SEQUENCE [LARGE SCALE GENOMIC DNA]</scope>
    <source>
        <strain evidence="2">Rob3c / Tucson 14021-0248.25</strain>
    </source>
</reference>
<keyword id="KW-0413">Isomerase</keyword>
<keyword id="KW-0479">Metal-binding</keyword>
<keyword id="KW-0520">NAD</keyword>
<keyword id="KW-0521">NADP</keyword>
<keyword id="KW-0547">Nucleotide-binding</keyword>
<keyword id="KW-0630">Potassium</keyword>
<keyword id="KW-1185">Reference proteome</keyword>